<organism>
    <name type="scientific">Mycobacterium tuberculosis (strain ATCC 25618 / H37Rv)</name>
    <dbReference type="NCBI Taxonomy" id="83332"/>
    <lineage>
        <taxon>Bacteria</taxon>
        <taxon>Bacillati</taxon>
        <taxon>Actinomycetota</taxon>
        <taxon>Actinomycetes</taxon>
        <taxon>Mycobacteriales</taxon>
        <taxon>Mycobacteriaceae</taxon>
        <taxon>Mycobacterium</taxon>
        <taxon>Mycobacterium tuberculosis complex</taxon>
    </lineage>
</organism>
<accession>P9WPN7</accession>
<accession>D0EW74</accession>
<accession>F2GJB1</accession>
<accession>P63713</accession>
<accession>Q59572</accession>
<proteinExistence type="evidence at protein level"/>
<name>CP128_MYCTU</name>
<dbReference type="EC" id="1.14.15.27" evidence="2"/>
<dbReference type="EMBL" id="GQ900522">
    <property type="protein sequence ID" value="ACX47921.1"/>
    <property type="molecule type" value="Genomic_DNA"/>
</dbReference>
<dbReference type="EMBL" id="AL123456">
    <property type="protein sequence ID" value="CCP45049.1"/>
    <property type="molecule type" value="Genomic_DNA"/>
</dbReference>
<dbReference type="PIR" id="H70729">
    <property type="entry name" value="H70729"/>
</dbReference>
<dbReference type="RefSeq" id="NP_216784.1">
    <property type="nucleotide sequence ID" value="NC_000962.3"/>
</dbReference>
<dbReference type="RefSeq" id="WP_003411663.1">
    <property type="nucleotide sequence ID" value="NZ_NVQJ01000008.1"/>
</dbReference>
<dbReference type="SMR" id="P9WPN7"/>
<dbReference type="FunCoup" id="P9WPN7">
    <property type="interactions" value="11"/>
</dbReference>
<dbReference type="STRING" id="83332.Rv2268c"/>
<dbReference type="PaxDb" id="83332-Rv2268c"/>
<dbReference type="DNASU" id="888025"/>
<dbReference type="GeneID" id="888025"/>
<dbReference type="KEGG" id="mtu:Rv2268c"/>
<dbReference type="KEGG" id="mtv:RVBD_2268c"/>
<dbReference type="TubercuList" id="Rv2268c"/>
<dbReference type="eggNOG" id="COG2124">
    <property type="taxonomic scope" value="Bacteria"/>
</dbReference>
<dbReference type="InParanoid" id="P9WPN7"/>
<dbReference type="OrthoDB" id="502624at2"/>
<dbReference type="PhylomeDB" id="P9WPN7"/>
<dbReference type="BioCyc" id="MetaCyc:G185E-6485-MONOMER"/>
<dbReference type="BRENDA" id="1.14.15.27">
    <property type="organism ID" value="3445"/>
</dbReference>
<dbReference type="Proteomes" id="UP000001584">
    <property type="component" value="Chromosome"/>
</dbReference>
<dbReference type="GO" id="GO:0005737">
    <property type="term" value="C:cytoplasm"/>
    <property type="evidence" value="ECO:0007669"/>
    <property type="project" value="UniProtKB-SubCell"/>
</dbReference>
<dbReference type="GO" id="GO:0036199">
    <property type="term" value="F:cholest-4-en-3-one 26-monooxygenase activity"/>
    <property type="evidence" value="ECO:0000318"/>
    <property type="project" value="GO_Central"/>
</dbReference>
<dbReference type="GO" id="GO:0020037">
    <property type="term" value="F:heme binding"/>
    <property type="evidence" value="ECO:0000318"/>
    <property type="project" value="GO_Central"/>
</dbReference>
<dbReference type="GO" id="GO:0005506">
    <property type="term" value="F:iron ion binding"/>
    <property type="evidence" value="ECO:0007669"/>
    <property type="project" value="InterPro"/>
</dbReference>
<dbReference type="GO" id="GO:0008395">
    <property type="term" value="F:steroid hydroxylase activity"/>
    <property type="evidence" value="ECO:0000318"/>
    <property type="project" value="GO_Central"/>
</dbReference>
<dbReference type="GO" id="GO:0006707">
    <property type="term" value="P:cholesterol catabolic process"/>
    <property type="evidence" value="ECO:0000318"/>
    <property type="project" value="GO_Central"/>
</dbReference>
<dbReference type="Gene3D" id="1.10.630.10">
    <property type="entry name" value="Cytochrome P450"/>
    <property type="match status" value="1"/>
</dbReference>
<dbReference type="InterPro" id="IPR001128">
    <property type="entry name" value="Cyt_P450"/>
</dbReference>
<dbReference type="InterPro" id="IPR002397">
    <property type="entry name" value="Cyt_P450_B"/>
</dbReference>
<dbReference type="InterPro" id="IPR017972">
    <property type="entry name" value="Cyt_P450_CS"/>
</dbReference>
<dbReference type="InterPro" id="IPR036396">
    <property type="entry name" value="Cyt_P450_sf"/>
</dbReference>
<dbReference type="PANTHER" id="PTHR46696:SF4">
    <property type="entry name" value="BIOTIN BIOSYNTHESIS CYTOCHROME P450"/>
    <property type="match status" value="1"/>
</dbReference>
<dbReference type="PANTHER" id="PTHR46696">
    <property type="entry name" value="P450, PUTATIVE (EUROFUNG)-RELATED"/>
    <property type="match status" value="1"/>
</dbReference>
<dbReference type="Pfam" id="PF00067">
    <property type="entry name" value="p450"/>
    <property type="match status" value="1"/>
</dbReference>
<dbReference type="PRINTS" id="PR00359">
    <property type="entry name" value="BP450"/>
</dbReference>
<dbReference type="SUPFAM" id="SSF48264">
    <property type="entry name" value="Cytochrome P450"/>
    <property type="match status" value="1"/>
</dbReference>
<dbReference type="PROSITE" id="PS00086">
    <property type="entry name" value="CYTOCHROME_P450"/>
    <property type="match status" value="1"/>
</dbReference>
<comment type="function">
    <text evidence="2">Involved in the biosynthesis of sulfomenaquinone (SMK, initially named S881 on the basis of its mass), which is localized in the outer envelope of M.tuberculosis and negatively regulates its virulence (PubMed:27933784). Catalyzes the hydroxylation of beta-dihydromenaquinone-9, leading to the formation of omega-hydroxy-beta-dihydromenaquinone-9 (PubMed:27933784).</text>
</comment>
<comment type="catalytic activity">
    <reaction evidence="2">
        <text>beta-dihydromenaquinone-9 + 2 reduced [2Fe-2S]-[ferredoxin] + O2 + 2 H(+) = omega-hydroxy-beta-dihydromenaquinone-9 + 2 oxidized [2Fe-2S]-[ferredoxin] + H2O</text>
        <dbReference type="Rhea" id="RHEA:56680"/>
        <dbReference type="Rhea" id="RHEA-COMP:10000"/>
        <dbReference type="Rhea" id="RHEA-COMP:10001"/>
        <dbReference type="ChEBI" id="CHEBI:15377"/>
        <dbReference type="ChEBI" id="CHEBI:15378"/>
        <dbReference type="ChEBI" id="CHEBI:15379"/>
        <dbReference type="ChEBI" id="CHEBI:33737"/>
        <dbReference type="ChEBI" id="CHEBI:33738"/>
        <dbReference type="ChEBI" id="CHEBI:134607"/>
        <dbReference type="ChEBI" id="CHEBI:140189"/>
        <dbReference type="EC" id="1.14.15.27"/>
    </reaction>
    <physiologicalReaction direction="left-to-right" evidence="2">
        <dbReference type="Rhea" id="RHEA:56681"/>
    </physiologicalReaction>
</comment>
<comment type="cofactor">
    <cofactor evidence="1">
        <name>heme</name>
        <dbReference type="ChEBI" id="CHEBI:30413"/>
    </cofactor>
</comment>
<comment type="subcellular location">
    <subcellularLocation>
        <location evidence="4">Cytoplasm</location>
    </subcellularLocation>
</comment>
<comment type="disruption phenotype">
    <text evidence="2">Deletion mutant does not synthesize SMK and shows a hypervirulent phenotype in the mouse model of infection (PubMed:27933784). Loss of the gene does not affect levels of menaquinone-9 (MK-9), an essential component in the electron-transport chain in M.tuberculosis (PubMed:27933784).</text>
</comment>
<comment type="similarity">
    <text evidence="3">Belongs to the cytochrome P450 family.</text>
</comment>
<evidence type="ECO:0000250" key="1">
    <source>
        <dbReference type="UniProtKB" id="Q00441"/>
    </source>
</evidence>
<evidence type="ECO:0000269" key="2">
    <source>
    </source>
</evidence>
<evidence type="ECO:0000305" key="3"/>
<evidence type="ECO:0000305" key="4">
    <source>
    </source>
</evidence>
<reference key="1">
    <citation type="submission" date="2009-09" db="EMBL/GenBank/DDBJ databases">
        <title>Polymorphism of cytochrome P450 of drug resistant form of Mycobacterium tuberculosis.</title>
        <authorList>
            <person name="Vasilevskaya A.V."/>
            <person name="Alyapkina Y.S."/>
            <person name="Usanov S.A."/>
        </authorList>
    </citation>
    <scope>NUCLEOTIDE SEQUENCE [GENOMIC DNA]</scope>
</reference>
<reference key="2">
    <citation type="journal article" date="1998" name="Nature">
        <title>Deciphering the biology of Mycobacterium tuberculosis from the complete genome sequence.</title>
        <authorList>
            <person name="Cole S.T."/>
            <person name="Brosch R."/>
            <person name="Parkhill J."/>
            <person name="Garnier T."/>
            <person name="Churcher C.M."/>
            <person name="Harris D.E."/>
            <person name="Gordon S.V."/>
            <person name="Eiglmeier K."/>
            <person name="Gas S."/>
            <person name="Barry C.E. III"/>
            <person name="Tekaia F."/>
            <person name="Badcock K."/>
            <person name="Basham D."/>
            <person name="Brown D."/>
            <person name="Chillingworth T."/>
            <person name="Connor R."/>
            <person name="Davies R.M."/>
            <person name="Devlin K."/>
            <person name="Feltwell T."/>
            <person name="Gentles S."/>
            <person name="Hamlin N."/>
            <person name="Holroyd S."/>
            <person name="Hornsby T."/>
            <person name="Jagels K."/>
            <person name="Krogh A."/>
            <person name="McLean J."/>
            <person name="Moule S."/>
            <person name="Murphy L.D."/>
            <person name="Oliver S."/>
            <person name="Osborne J."/>
            <person name="Quail M.A."/>
            <person name="Rajandream M.A."/>
            <person name="Rogers J."/>
            <person name="Rutter S."/>
            <person name="Seeger K."/>
            <person name="Skelton S."/>
            <person name="Squares S."/>
            <person name="Squares R."/>
            <person name="Sulston J.E."/>
            <person name="Taylor K."/>
            <person name="Whitehead S."/>
            <person name="Barrell B.G."/>
        </authorList>
    </citation>
    <scope>NUCLEOTIDE SEQUENCE [LARGE SCALE GENOMIC DNA]</scope>
    <source>
        <strain>ATCC 25618 / H37Rv</strain>
    </source>
</reference>
<reference key="3">
    <citation type="journal article" date="2016" name="ACS Infect. Dis.">
        <title>Biosynthesis and regulation of sulfomenaquinone, a metabolite associated with virulence in Mycobacterium tuberculosis.</title>
        <authorList>
            <person name="Sogi K.M."/>
            <person name="Holsclaw C.M."/>
            <person name="Fragiadakis G.K."/>
            <person name="Nomura D.K."/>
            <person name="Leary J.A."/>
            <person name="Bertozzi C.R."/>
        </authorList>
    </citation>
    <scope>FUNCTION</scope>
    <scope>CATALYTIC ACTIVITY</scope>
    <scope>DISRUPTION PHENOTYPE</scope>
    <source>
        <strain>H37Rv</strain>
    </source>
</reference>
<keyword id="KW-0963">Cytoplasm</keyword>
<keyword id="KW-0349">Heme</keyword>
<keyword id="KW-0408">Iron</keyword>
<keyword id="KW-0479">Metal-binding</keyword>
<keyword id="KW-0503">Monooxygenase</keyword>
<keyword id="KW-0560">Oxidoreductase</keyword>
<keyword id="KW-1185">Reference proteome</keyword>
<protein>
    <recommendedName>
        <fullName evidence="3">Beta-dihydromenaquinone-9 omega-hydroxylase</fullName>
        <ecNumber evidence="2">1.14.15.27</ecNumber>
    </recommendedName>
    <alternativeName>
        <fullName evidence="3">Cytochrome P450 128</fullName>
    </alternativeName>
</protein>
<gene>
    <name type="primary">cyp128</name>
    <name type="ordered locus">Rv2268c</name>
    <name type="ORF">MTCY339.42</name>
</gene>
<feature type="chain" id="PRO_0000052284" description="Beta-dihydromenaquinone-9 omega-hydroxylase">
    <location>
        <begin position="1"/>
        <end position="489"/>
    </location>
</feature>
<feature type="binding site" description="axial binding residue" evidence="1">
    <location>
        <position position="435"/>
    </location>
    <ligand>
        <name>heme</name>
        <dbReference type="ChEBI" id="CHEBI:30413"/>
    </ligand>
    <ligandPart>
        <name>Fe</name>
        <dbReference type="ChEBI" id="CHEBI:18248"/>
    </ligandPart>
</feature>
<sequence>MTATQSPPEPAPDRVRLAGCPLAGTPDVGLTAQDATTALGVPTRRRASSGGIPVATSMWRDAQTVRTYGPAVAKALALRVAGKARSRLTGRHCRKFMQLTDFDPFDPAIAADPYPHYRELLAGERVQYNPKRDVYILSRYADVREAARNHDTLSSARGVTFSRGWLPFLPTSDPPAHTRMRKQLAPGMARGALETWRPMVDQLARELVGGLLTQTPADVVSTVAAPMPMRAITSVLGVDGPDEAAFCRLSNQAVRITDVALSASGLISLVQGFAGFRRLRALFTHRRDNGLLRECTVLGKLATHAEQGRLSDDELFFFAVLLLVAGYESTAHMISTLFLTLADYPDQLTLLAQQPDLIPSAIEEHLRFISPIQNICRTTRVDYSVGQAVIPAGSLVLLAWGAANRDPRQYEDPDVFRADRNPVGHLAFGSGIHLCPGTQLARMEGQAILREIVANIDRIEVVEPPTWTTNANLRGLTRLRVAVTPRVAP</sequence>